<evidence type="ECO:0000250" key="1">
    <source>
        <dbReference type="UniProtKB" id="P68603"/>
    </source>
</evidence>
<evidence type="ECO:0000305" key="2"/>
<dbReference type="EMBL" id="M57977">
    <property type="protein sequence ID" value="AAA48292.1"/>
    <property type="molecule type" value="Genomic_DNA"/>
</dbReference>
<dbReference type="SMR" id="P68602"/>
<dbReference type="DNASU" id="3707502"/>
<dbReference type="KEGG" id="vg:3707502"/>
<dbReference type="InterPro" id="IPR009521">
    <property type="entry name" value="Orthopox_F6"/>
</dbReference>
<dbReference type="Pfam" id="PF06601">
    <property type="entry name" value="Orthopox_F6"/>
    <property type="match status" value="1"/>
</dbReference>
<organismHost>
    <name type="scientific">Homo sapiens</name>
    <name type="common">Human</name>
    <dbReference type="NCBI Taxonomy" id="9606"/>
</organismHost>
<comment type="induction">
    <text evidence="1">Expressed in the early phase of the viral replicative cycle.</text>
</comment>
<comment type="similarity">
    <text evidence="2">Belongs to the orthopoxvirus OPG050 family.</text>
</comment>
<name>PG050_VACCP</name>
<proteinExistence type="inferred from homology"/>
<accession>P68602</accession>
<accession>P21015</accession>
<feature type="chain" id="PRO_0000099480" description="Protein OPG050">
    <location>
        <begin position="1"/>
        <end position="74"/>
    </location>
</feature>
<sequence length="74" mass="8638">MSKILTFVKNKIIDLINNDQIKYSRVIMIEESDSLLPVDEVHANHGFDCVEMIDENISNENIEQYKTESFFTIN</sequence>
<gene>
    <name type="primary">OPG050</name>
    <name type="ORF">F12L</name>
</gene>
<protein>
    <recommendedName>
        <fullName>Protein OPG050</fullName>
    </recommendedName>
    <alternativeName>
        <fullName>Protein F12</fullName>
    </alternativeName>
    <alternativeName>
        <fullName>Protein F6</fullName>
    </alternativeName>
</protein>
<keyword id="KW-0244">Early protein</keyword>
<reference key="1">
    <citation type="journal article" date="1988" name="Biotekhnologiya">
        <title>Structural-functional organization of segment of vaccinia virus genome.</title>
        <authorList>
            <person name="Mikryukov N.N."/>
            <person name="Chizhikov V.E."/>
            <person name="Prikhod'Ko G.G."/>
            <person name="Urmmanov I.M."/>
            <person name="Serpinskii O.I."/>
            <person name="Blinov V.M."/>
            <person name="Nikulin A.E."/>
            <person name="Vasilenko S.K."/>
        </authorList>
    </citation>
    <scope>NUCLEOTIDE SEQUENCE [GENOMIC DNA]</scope>
</reference>
<organism>
    <name type="scientific">Vaccinia virus (strain L-IVP)</name>
    <name type="common">VACV</name>
    <dbReference type="NCBI Taxonomy" id="31531"/>
    <lineage>
        <taxon>Viruses</taxon>
        <taxon>Varidnaviria</taxon>
        <taxon>Bamfordvirae</taxon>
        <taxon>Nucleocytoviricota</taxon>
        <taxon>Pokkesviricetes</taxon>
        <taxon>Chitovirales</taxon>
        <taxon>Poxviridae</taxon>
        <taxon>Chordopoxvirinae</taxon>
        <taxon>Orthopoxvirus</taxon>
        <taxon>Vaccinia virus</taxon>
    </lineage>
</organism>